<organism>
    <name type="scientific">Polistes dominula</name>
    <name type="common">European paper wasp</name>
    <name type="synonym">Vespa dominula</name>
    <dbReference type="NCBI Taxonomy" id="743375"/>
    <lineage>
        <taxon>Eukaryota</taxon>
        <taxon>Metazoa</taxon>
        <taxon>Ecdysozoa</taxon>
        <taxon>Arthropoda</taxon>
        <taxon>Hexapoda</taxon>
        <taxon>Insecta</taxon>
        <taxon>Pterygota</taxon>
        <taxon>Neoptera</taxon>
        <taxon>Endopterygota</taxon>
        <taxon>Hymenoptera</taxon>
        <taxon>Apocrita</taxon>
        <taxon>Aculeata</taxon>
        <taxon>Vespoidea</taxon>
        <taxon>Vespidae</taxon>
        <taxon>Polistinae</taxon>
        <taxon>Polistini</taxon>
        <taxon>Polistes</taxon>
    </lineage>
</organism>
<proteinExistence type="evidence at protein level"/>
<accession>P0C1M7</accession>
<protein>
    <recommendedName>
        <fullName evidence="2">Dominulin-B</fullName>
    </recommendedName>
</protein>
<reference key="1">
    <citation type="journal article" date="2006" name="J. Am. Soc. Mass Spectrom.">
        <title>Dominulin A and B: two new antibacterial peptides identified on the cuticle and in the venom of the social paper wasp Polistes dominulus using MALDI-TOF, MALDI-TOF/TOF, and ESI-ion trap.</title>
        <authorList>
            <person name="Turillazzi S."/>
            <person name="Mastrobuoni G."/>
            <person name="Dani F.R."/>
            <person name="Moneti G."/>
            <person name="Pieraccini G."/>
            <person name="la Marca G."/>
            <person name="Bartolucci G."/>
            <person name="Perito B."/>
            <person name="Lambardi D."/>
            <person name="Cavallini V."/>
            <person name="Dapporto L."/>
        </authorList>
    </citation>
    <scope>PROTEIN SEQUENCE</scope>
    <scope>FUNCTION</scope>
    <scope>SUBCELLULAR LOCATION</scope>
    <scope>TISSUE SPECIFICITY</scope>
    <scope>AMIDATION AT LEU-17</scope>
    <scope>MASS SPECTROMETRY</scope>
    <scope>SYNTHESIS</scope>
    <source>
        <tissue>Cuticle</tissue>
        <tissue>Venom</tissue>
    </source>
</reference>
<feature type="peptide" id="PRO_0000246013" description="Dominulin-B" evidence="1">
    <location>
        <begin position="1"/>
        <end position="17"/>
    </location>
</feature>
<feature type="modified residue" description="Leucine amide" evidence="1">
    <location>
        <position position="17"/>
    </location>
</feature>
<sequence>INWKKIAEIGKQVLSAL</sequence>
<keyword id="KW-0027">Amidation</keyword>
<keyword id="KW-0044">Antibiotic</keyword>
<keyword id="KW-0929">Antimicrobial</keyword>
<keyword id="KW-0903">Direct protein sequencing</keyword>
<keyword id="KW-0391">Immunity</keyword>
<keyword id="KW-0399">Innate immunity</keyword>
<keyword id="KW-0964">Secreted</keyword>
<dbReference type="Proteomes" id="UP000694924">
    <property type="component" value="Unplaced"/>
</dbReference>
<dbReference type="GO" id="GO:0005576">
    <property type="term" value="C:extracellular region"/>
    <property type="evidence" value="ECO:0007669"/>
    <property type="project" value="UniProtKB-SubCell"/>
</dbReference>
<dbReference type="GO" id="GO:0042742">
    <property type="term" value="P:defense response to bacterium"/>
    <property type="evidence" value="ECO:0007669"/>
    <property type="project" value="UniProtKB-KW"/>
</dbReference>
<dbReference type="GO" id="GO:0045087">
    <property type="term" value="P:innate immune response"/>
    <property type="evidence" value="ECO:0007669"/>
    <property type="project" value="UniProtKB-KW"/>
</dbReference>
<comment type="function">
    <text evidence="1">Shows antimicrobial activity against the Gram-positive bacteria B.subtilis ATCC 6633 (MIC=2 ug/ml), and the Gram-negative bacteria E.coli JM109 (MIC=8 ug/ml).</text>
</comment>
<comment type="subcellular location">
    <subcellularLocation>
        <location evidence="1">Secreted</location>
    </subcellularLocation>
</comment>
<comment type="tissue specificity">
    <text evidence="1">Expressed by the venom gland. This peptide is also found on female cuticle and nest paper. The venom could be the source of these peptides, which could be spread all over the cuticle by the frequent grooming movements of the female wasps.</text>
</comment>
<comment type="mass spectrometry"/>
<comment type="mass spectrometry"/>
<comment type="similarity">
    <text evidence="3">Belongs to the MCD family. Mastoparan subfamily.</text>
</comment>
<evidence type="ECO:0000269" key="1">
    <source>
    </source>
</evidence>
<evidence type="ECO:0000303" key="2">
    <source>
    </source>
</evidence>
<evidence type="ECO:0000305" key="3"/>
<name>MASTB_POLDO</name>